<evidence type="ECO:0000250" key="1"/>
<evidence type="ECO:0000305" key="2"/>
<accession>A4WJK5</accession>
<gene>
    <name type="primary">dapAL</name>
    <name type="ordered locus">Pars_0992</name>
</gene>
<feature type="chain" id="PRO_1000050252" description="Uncharacterized DapA-like lyase Pars_0992">
    <location>
        <begin position="1"/>
        <end position="301"/>
    </location>
</feature>
<feature type="active site" description="Charge relay system" evidence="1">
    <location>
        <position position="44"/>
    </location>
</feature>
<feature type="active site" description="Charge relay system" evidence="1">
    <location>
        <position position="107"/>
    </location>
</feature>
<feature type="active site" description="Proton donor" evidence="1">
    <location>
        <position position="133"/>
    </location>
</feature>
<feature type="active site" description="Schiff-base intermediate with substrate" evidence="1">
    <location>
        <position position="162"/>
    </location>
</feature>
<reference key="1">
    <citation type="submission" date="2007-04" db="EMBL/GenBank/DDBJ databases">
        <title>Complete sequence of Pyrobaculum arsenaticum DSM 13514.</title>
        <authorList>
            <consortium name="US DOE Joint Genome Institute"/>
            <person name="Copeland A."/>
            <person name="Lucas S."/>
            <person name="Lapidus A."/>
            <person name="Barry K."/>
            <person name="Glavina del Rio T."/>
            <person name="Dalin E."/>
            <person name="Tice H."/>
            <person name="Pitluck S."/>
            <person name="Chain P."/>
            <person name="Malfatti S."/>
            <person name="Shin M."/>
            <person name="Vergez L."/>
            <person name="Schmutz J."/>
            <person name="Larimer F."/>
            <person name="Land M."/>
            <person name="Hauser L."/>
            <person name="Kyrpides N."/>
            <person name="Mikhailova N."/>
            <person name="Cozen A.E."/>
            <person name="Fitz-Gibbon S.T."/>
            <person name="House C.H."/>
            <person name="Saltikov C."/>
            <person name="Lowe T.M."/>
            <person name="Richardson P."/>
        </authorList>
    </citation>
    <scope>NUCLEOTIDE SEQUENCE [LARGE SCALE GENOMIC DNA]</scope>
    <source>
        <strain>ATCC 700994 / DSM 13514 / JCM 11321 / PZ6</strain>
    </source>
</reference>
<protein>
    <recommendedName>
        <fullName>Uncharacterized DapA-like lyase Pars_0992</fullName>
        <ecNumber>4.-.-.-</ecNumber>
    </recommendedName>
</protein>
<organism>
    <name type="scientific">Pyrobaculum arsenaticum (strain DSM 13514 / JCM 11321 / PZ6)</name>
    <dbReference type="NCBI Taxonomy" id="340102"/>
    <lineage>
        <taxon>Archaea</taxon>
        <taxon>Thermoproteota</taxon>
        <taxon>Thermoprotei</taxon>
        <taxon>Thermoproteales</taxon>
        <taxon>Thermoproteaceae</taxon>
        <taxon>Pyrobaculum</taxon>
    </lineage>
</organism>
<comment type="subunit">
    <text evidence="1">Homotetramer.</text>
</comment>
<comment type="subcellular location">
    <subcellularLocation>
        <location evidence="2">Cytoplasm</location>
    </subcellularLocation>
</comment>
<comment type="similarity">
    <text evidence="2">Belongs to the DapA family.</text>
</comment>
<name>DAPAL_PYRAR</name>
<sequence>MKLEGVIAATVTPFTKDGVNYEGLRIILSRIVEAGYHGVFPTSSTGEVTKLTPEERVKVMEVAKEVAGGKALVIAGTGTGDHLSTIDMVRRYKDVGVDVVLITPPYYIQYDWAAIYAFYKKVLDKTDVPVILYTIPLATGYNIPVEVFELVANEYSQVVGVKDSSGDFRYHLDLIYLLGRRLSVLQGLDMLFVPSLIMGAHGGILAGPNFLGKTTLEQYRLVKEGKTAEAVSLHNKLMPLWRFMGGCGLVGKLGGKWPTLYKLATQLVHGIDMGPPREPLPPVEDKDRKELEKILKELGLI</sequence>
<dbReference type="EC" id="4.-.-.-"/>
<dbReference type="EMBL" id="CP000660">
    <property type="protein sequence ID" value="ABP50572.1"/>
    <property type="molecule type" value="Genomic_DNA"/>
</dbReference>
<dbReference type="SMR" id="A4WJK5"/>
<dbReference type="STRING" id="340102.Pars_0992"/>
<dbReference type="KEGG" id="pas:Pars_0992"/>
<dbReference type="HOGENOM" id="CLU_049343_5_1_2"/>
<dbReference type="OrthoDB" id="33636at2157"/>
<dbReference type="PhylomeDB" id="A4WJK5"/>
<dbReference type="Proteomes" id="UP000001567">
    <property type="component" value="Chromosome"/>
</dbReference>
<dbReference type="GO" id="GO:0005737">
    <property type="term" value="C:cytoplasm"/>
    <property type="evidence" value="ECO:0007669"/>
    <property type="project" value="UniProtKB-SubCell"/>
</dbReference>
<dbReference type="GO" id="GO:0008675">
    <property type="term" value="F:2-dehydro-3-deoxy-phosphogluconate aldolase activity"/>
    <property type="evidence" value="ECO:0007669"/>
    <property type="project" value="UniProtKB-ARBA"/>
</dbReference>
<dbReference type="GO" id="GO:0008840">
    <property type="term" value="F:4-hydroxy-tetrahydrodipicolinate synthase activity"/>
    <property type="evidence" value="ECO:0007669"/>
    <property type="project" value="TreeGrafter"/>
</dbReference>
<dbReference type="CDD" id="cd00408">
    <property type="entry name" value="DHDPS-like"/>
    <property type="match status" value="1"/>
</dbReference>
<dbReference type="Gene3D" id="3.20.20.70">
    <property type="entry name" value="Aldolase class I"/>
    <property type="match status" value="1"/>
</dbReference>
<dbReference type="InterPro" id="IPR013785">
    <property type="entry name" value="Aldolase_TIM"/>
</dbReference>
<dbReference type="InterPro" id="IPR002220">
    <property type="entry name" value="DapA-like"/>
</dbReference>
<dbReference type="PANTHER" id="PTHR12128:SF66">
    <property type="entry name" value="4-HYDROXY-2-OXOGLUTARATE ALDOLASE, MITOCHONDRIAL"/>
    <property type="match status" value="1"/>
</dbReference>
<dbReference type="PANTHER" id="PTHR12128">
    <property type="entry name" value="DIHYDRODIPICOLINATE SYNTHASE"/>
    <property type="match status" value="1"/>
</dbReference>
<dbReference type="Pfam" id="PF00701">
    <property type="entry name" value="DHDPS"/>
    <property type="match status" value="1"/>
</dbReference>
<dbReference type="PIRSF" id="PIRSF001365">
    <property type="entry name" value="DHDPS"/>
    <property type="match status" value="1"/>
</dbReference>
<dbReference type="PRINTS" id="PR00146">
    <property type="entry name" value="DHPICSNTHASE"/>
</dbReference>
<dbReference type="SMART" id="SM01130">
    <property type="entry name" value="DHDPS"/>
    <property type="match status" value="1"/>
</dbReference>
<dbReference type="SUPFAM" id="SSF51569">
    <property type="entry name" value="Aldolase"/>
    <property type="match status" value="1"/>
</dbReference>
<proteinExistence type="inferred from homology"/>
<keyword id="KW-0963">Cytoplasm</keyword>
<keyword id="KW-0456">Lyase</keyword>
<keyword id="KW-0704">Schiff base</keyword>